<feature type="chain" id="PRO_1000091575" description="Serine hydroxymethyltransferase">
    <location>
        <begin position="1"/>
        <end position="417"/>
    </location>
</feature>
<feature type="binding site" evidence="1">
    <location>
        <position position="121"/>
    </location>
    <ligand>
        <name>(6S)-5,6,7,8-tetrahydrofolate</name>
        <dbReference type="ChEBI" id="CHEBI:57453"/>
    </ligand>
</feature>
<feature type="binding site" evidence="1">
    <location>
        <begin position="125"/>
        <end position="127"/>
    </location>
    <ligand>
        <name>(6S)-5,6,7,8-tetrahydrofolate</name>
        <dbReference type="ChEBI" id="CHEBI:57453"/>
    </ligand>
</feature>
<feature type="binding site" evidence="1">
    <location>
        <begin position="355"/>
        <end position="357"/>
    </location>
    <ligand>
        <name>(6S)-5,6,7,8-tetrahydrofolate</name>
        <dbReference type="ChEBI" id="CHEBI:57453"/>
    </ligand>
</feature>
<feature type="site" description="Plays an important role in substrate specificity" evidence="1">
    <location>
        <position position="228"/>
    </location>
</feature>
<feature type="modified residue" description="N6-(pyridoxal phosphate)lysine" evidence="1">
    <location>
        <position position="229"/>
    </location>
</feature>
<accession>B4T1D1</accession>
<comment type="function">
    <text evidence="1">Catalyzes the reversible interconversion of serine and glycine with tetrahydrofolate (THF) serving as the one-carbon carrier. This reaction serves as the major source of one-carbon groups required for the biosynthesis of purines, thymidylate, methionine, and other important biomolecules. Also exhibits THF-independent aldolase activity toward beta-hydroxyamino acids, producing glycine and aldehydes, via a retro-aldol mechanism.</text>
</comment>
<comment type="catalytic activity">
    <reaction evidence="1">
        <text>(6R)-5,10-methylene-5,6,7,8-tetrahydrofolate + glycine + H2O = (6S)-5,6,7,8-tetrahydrofolate + L-serine</text>
        <dbReference type="Rhea" id="RHEA:15481"/>
        <dbReference type="ChEBI" id="CHEBI:15377"/>
        <dbReference type="ChEBI" id="CHEBI:15636"/>
        <dbReference type="ChEBI" id="CHEBI:33384"/>
        <dbReference type="ChEBI" id="CHEBI:57305"/>
        <dbReference type="ChEBI" id="CHEBI:57453"/>
        <dbReference type="EC" id="2.1.2.1"/>
    </reaction>
</comment>
<comment type="cofactor">
    <cofactor evidence="1">
        <name>pyridoxal 5'-phosphate</name>
        <dbReference type="ChEBI" id="CHEBI:597326"/>
    </cofactor>
</comment>
<comment type="pathway">
    <text evidence="1">One-carbon metabolism; tetrahydrofolate interconversion.</text>
</comment>
<comment type="pathway">
    <text evidence="1">Amino-acid biosynthesis; glycine biosynthesis; glycine from L-serine: step 1/1.</text>
</comment>
<comment type="subunit">
    <text evidence="1">Homodimer.</text>
</comment>
<comment type="subcellular location">
    <subcellularLocation>
        <location evidence="1">Cytoplasm</location>
    </subcellularLocation>
</comment>
<comment type="similarity">
    <text evidence="1">Belongs to the SHMT family.</text>
</comment>
<sequence length="417" mass="45455">MLKREMNIADYDAELWQAMEQEKVRQEEHIELIASENYTSPRVMQAQGSQLTNKYAEGYPGKRYYGGCEYVDVVEQLAIDRAKELFGADYANVQPHSGSQANFAVYTALLQPGDTVLGMNLAQGGHLTHGSPVNFSGKLYNIVPYGIDESGKIDYDEMAKLAKEHKPKMIIGGFSAYSGVVDWAKMREIADSIGAYLFVDMAHVAGLIAAGVYPNPVPHAHVVTTTTHKTLAGPRGGLILAKGGDEELYKKLNSAVFPSAQGGPLMHVIAGKAVALKEAMEPEFKVYQQQVAKNAKAMVEVFLNRGYKVVSGGTENHLFLLDLVDKNLTGKEADAALGRANITVNKNSVPNDPKSPFVTSGIRIGSPAVTRRGFKEAEVKELAGWMCDVLDNINDEATIERVKAKVLDICARFPVYA</sequence>
<protein>
    <recommendedName>
        <fullName evidence="1">Serine hydroxymethyltransferase</fullName>
        <shortName evidence="1">SHMT</shortName>
        <shortName evidence="1">Serine methylase</shortName>
        <ecNumber evidence="1">2.1.2.1</ecNumber>
    </recommendedName>
</protein>
<keyword id="KW-0028">Amino-acid biosynthesis</keyword>
<keyword id="KW-0963">Cytoplasm</keyword>
<keyword id="KW-0554">One-carbon metabolism</keyword>
<keyword id="KW-0663">Pyridoxal phosphate</keyword>
<keyword id="KW-0808">Transferase</keyword>
<organism>
    <name type="scientific">Salmonella newport (strain SL254)</name>
    <dbReference type="NCBI Taxonomy" id="423368"/>
    <lineage>
        <taxon>Bacteria</taxon>
        <taxon>Pseudomonadati</taxon>
        <taxon>Pseudomonadota</taxon>
        <taxon>Gammaproteobacteria</taxon>
        <taxon>Enterobacterales</taxon>
        <taxon>Enterobacteriaceae</taxon>
        <taxon>Salmonella</taxon>
    </lineage>
</organism>
<gene>
    <name evidence="1" type="primary">glyA</name>
    <name type="ordered locus">SNSL254_A2755</name>
</gene>
<proteinExistence type="inferred from homology"/>
<dbReference type="EC" id="2.1.2.1" evidence="1"/>
<dbReference type="EMBL" id="CP001113">
    <property type="protein sequence ID" value="ACF64657.1"/>
    <property type="molecule type" value="Genomic_DNA"/>
</dbReference>
<dbReference type="RefSeq" id="WP_000919178.1">
    <property type="nucleotide sequence ID" value="NZ_CCMR01000001.1"/>
</dbReference>
<dbReference type="SMR" id="B4T1D1"/>
<dbReference type="KEGG" id="see:SNSL254_A2755"/>
<dbReference type="HOGENOM" id="CLU_022477_2_1_6"/>
<dbReference type="UniPathway" id="UPA00193"/>
<dbReference type="UniPathway" id="UPA00288">
    <property type="reaction ID" value="UER01023"/>
</dbReference>
<dbReference type="Proteomes" id="UP000008824">
    <property type="component" value="Chromosome"/>
</dbReference>
<dbReference type="GO" id="GO:0005829">
    <property type="term" value="C:cytosol"/>
    <property type="evidence" value="ECO:0007669"/>
    <property type="project" value="TreeGrafter"/>
</dbReference>
<dbReference type="GO" id="GO:0004372">
    <property type="term" value="F:glycine hydroxymethyltransferase activity"/>
    <property type="evidence" value="ECO:0007669"/>
    <property type="project" value="UniProtKB-UniRule"/>
</dbReference>
<dbReference type="GO" id="GO:0030170">
    <property type="term" value="F:pyridoxal phosphate binding"/>
    <property type="evidence" value="ECO:0007669"/>
    <property type="project" value="UniProtKB-UniRule"/>
</dbReference>
<dbReference type="GO" id="GO:0019264">
    <property type="term" value="P:glycine biosynthetic process from serine"/>
    <property type="evidence" value="ECO:0007669"/>
    <property type="project" value="UniProtKB-UniRule"/>
</dbReference>
<dbReference type="GO" id="GO:0035999">
    <property type="term" value="P:tetrahydrofolate interconversion"/>
    <property type="evidence" value="ECO:0007669"/>
    <property type="project" value="UniProtKB-UniRule"/>
</dbReference>
<dbReference type="CDD" id="cd00378">
    <property type="entry name" value="SHMT"/>
    <property type="match status" value="1"/>
</dbReference>
<dbReference type="FunFam" id="3.40.640.10:FF:000001">
    <property type="entry name" value="Serine hydroxymethyltransferase"/>
    <property type="match status" value="1"/>
</dbReference>
<dbReference type="FunFam" id="3.90.1150.10:FF:000003">
    <property type="entry name" value="Serine hydroxymethyltransferase"/>
    <property type="match status" value="1"/>
</dbReference>
<dbReference type="Gene3D" id="3.90.1150.10">
    <property type="entry name" value="Aspartate Aminotransferase, domain 1"/>
    <property type="match status" value="1"/>
</dbReference>
<dbReference type="Gene3D" id="3.40.640.10">
    <property type="entry name" value="Type I PLP-dependent aspartate aminotransferase-like (Major domain)"/>
    <property type="match status" value="1"/>
</dbReference>
<dbReference type="HAMAP" id="MF_00051">
    <property type="entry name" value="SHMT"/>
    <property type="match status" value="1"/>
</dbReference>
<dbReference type="InterPro" id="IPR015424">
    <property type="entry name" value="PyrdxlP-dep_Trfase"/>
</dbReference>
<dbReference type="InterPro" id="IPR015421">
    <property type="entry name" value="PyrdxlP-dep_Trfase_major"/>
</dbReference>
<dbReference type="InterPro" id="IPR015422">
    <property type="entry name" value="PyrdxlP-dep_Trfase_small"/>
</dbReference>
<dbReference type="InterPro" id="IPR001085">
    <property type="entry name" value="Ser_HO-MeTrfase"/>
</dbReference>
<dbReference type="InterPro" id="IPR049943">
    <property type="entry name" value="Ser_HO-MeTrfase-like"/>
</dbReference>
<dbReference type="InterPro" id="IPR019798">
    <property type="entry name" value="Ser_HO-MeTrfase_PLP_BS"/>
</dbReference>
<dbReference type="InterPro" id="IPR039429">
    <property type="entry name" value="SHMT-like_dom"/>
</dbReference>
<dbReference type="NCBIfam" id="NF000586">
    <property type="entry name" value="PRK00011.1"/>
    <property type="match status" value="1"/>
</dbReference>
<dbReference type="PANTHER" id="PTHR11680">
    <property type="entry name" value="SERINE HYDROXYMETHYLTRANSFERASE"/>
    <property type="match status" value="1"/>
</dbReference>
<dbReference type="PANTHER" id="PTHR11680:SF50">
    <property type="entry name" value="SERINE HYDROXYMETHYLTRANSFERASE"/>
    <property type="match status" value="1"/>
</dbReference>
<dbReference type="Pfam" id="PF00464">
    <property type="entry name" value="SHMT"/>
    <property type="match status" value="1"/>
</dbReference>
<dbReference type="PIRSF" id="PIRSF000412">
    <property type="entry name" value="SHMT"/>
    <property type="match status" value="1"/>
</dbReference>
<dbReference type="SUPFAM" id="SSF53383">
    <property type="entry name" value="PLP-dependent transferases"/>
    <property type="match status" value="1"/>
</dbReference>
<dbReference type="PROSITE" id="PS00096">
    <property type="entry name" value="SHMT"/>
    <property type="match status" value="1"/>
</dbReference>
<evidence type="ECO:0000255" key="1">
    <source>
        <dbReference type="HAMAP-Rule" id="MF_00051"/>
    </source>
</evidence>
<reference key="1">
    <citation type="journal article" date="2011" name="J. Bacteriol.">
        <title>Comparative genomics of 28 Salmonella enterica isolates: evidence for CRISPR-mediated adaptive sublineage evolution.</title>
        <authorList>
            <person name="Fricke W.F."/>
            <person name="Mammel M.K."/>
            <person name="McDermott P.F."/>
            <person name="Tartera C."/>
            <person name="White D.G."/>
            <person name="Leclerc J.E."/>
            <person name="Ravel J."/>
            <person name="Cebula T.A."/>
        </authorList>
    </citation>
    <scope>NUCLEOTIDE SEQUENCE [LARGE SCALE GENOMIC DNA]</scope>
    <source>
        <strain>SL254</strain>
    </source>
</reference>
<name>GLYA_SALNS</name>